<feature type="chain" id="PRO_0000050730" description="Genetic suppressor element 1">
    <location>
        <begin position="1"/>
        <end position="1217"/>
    </location>
</feature>
<feature type="region of interest" description="Disordered" evidence="3">
    <location>
        <begin position="1"/>
        <end position="155"/>
    </location>
</feature>
<feature type="region of interest" description="Disordered" evidence="3">
    <location>
        <begin position="324"/>
        <end position="385"/>
    </location>
</feature>
<feature type="region of interest" description="Disordered" evidence="3">
    <location>
        <begin position="418"/>
        <end position="465"/>
    </location>
</feature>
<feature type="region of interest" description="Disordered" evidence="3">
    <location>
        <begin position="526"/>
        <end position="579"/>
    </location>
</feature>
<feature type="region of interest" description="Disordered" evidence="3">
    <location>
        <begin position="633"/>
        <end position="675"/>
    </location>
</feature>
<feature type="region of interest" description="Disordered" evidence="3">
    <location>
        <begin position="699"/>
        <end position="720"/>
    </location>
</feature>
<feature type="region of interest" description="Disordered" evidence="3">
    <location>
        <begin position="807"/>
        <end position="858"/>
    </location>
</feature>
<feature type="region of interest" description="Disordered" evidence="3">
    <location>
        <begin position="903"/>
        <end position="930"/>
    </location>
</feature>
<feature type="region of interest" description="Disordered" evidence="3">
    <location>
        <begin position="948"/>
        <end position="981"/>
    </location>
</feature>
<feature type="region of interest" description="Disordered" evidence="3">
    <location>
        <begin position="1068"/>
        <end position="1122"/>
    </location>
</feature>
<feature type="coiled-coil region" evidence="2">
    <location>
        <begin position="321"/>
        <end position="403"/>
    </location>
</feature>
<feature type="coiled-coil region" evidence="2">
    <location>
        <begin position="1127"/>
        <end position="1201"/>
    </location>
</feature>
<feature type="compositionally biased region" description="Polar residues" evidence="3">
    <location>
        <begin position="15"/>
        <end position="33"/>
    </location>
</feature>
<feature type="compositionally biased region" description="Low complexity" evidence="3">
    <location>
        <begin position="43"/>
        <end position="63"/>
    </location>
</feature>
<feature type="compositionally biased region" description="Low complexity" evidence="3">
    <location>
        <begin position="76"/>
        <end position="89"/>
    </location>
</feature>
<feature type="compositionally biased region" description="Low complexity" evidence="3">
    <location>
        <begin position="103"/>
        <end position="114"/>
    </location>
</feature>
<feature type="compositionally biased region" description="Basic and acidic residues" evidence="3">
    <location>
        <begin position="331"/>
        <end position="385"/>
    </location>
</feature>
<feature type="compositionally biased region" description="Low complexity" evidence="3">
    <location>
        <begin position="450"/>
        <end position="465"/>
    </location>
</feature>
<feature type="compositionally biased region" description="Basic and acidic residues" evidence="3">
    <location>
        <begin position="551"/>
        <end position="561"/>
    </location>
</feature>
<feature type="compositionally biased region" description="Basic and acidic residues" evidence="3">
    <location>
        <begin position="633"/>
        <end position="645"/>
    </location>
</feature>
<feature type="compositionally biased region" description="Pro residues" evidence="3">
    <location>
        <begin position="711"/>
        <end position="720"/>
    </location>
</feature>
<feature type="compositionally biased region" description="Basic residues" evidence="3">
    <location>
        <begin position="813"/>
        <end position="822"/>
    </location>
</feature>
<feature type="compositionally biased region" description="Polar residues" evidence="3">
    <location>
        <begin position="831"/>
        <end position="840"/>
    </location>
</feature>
<feature type="compositionally biased region" description="Polar residues" evidence="3">
    <location>
        <begin position="847"/>
        <end position="858"/>
    </location>
</feature>
<feature type="compositionally biased region" description="Polar residues" evidence="3">
    <location>
        <begin position="1068"/>
        <end position="1085"/>
    </location>
</feature>
<feature type="compositionally biased region" description="Acidic residues" evidence="3">
    <location>
        <begin position="1099"/>
        <end position="1117"/>
    </location>
</feature>
<feature type="modified residue" description="Phosphoserine" evidence="15">
    <location>
        <position position="10"/>
    </location>
</feature>
<feature type="modified residue" description="Phosphoserine" evidence="13 15">
    <location>
        <position position="84"/>
    </location>
</feature>
<feature type="modified residue" description="Phosphoserine" evidence="1">
    <location>
        <position position="95"/>
    </location>
</feature>
<feature type="modified residue" description="Asymmetric dimethylarginine" evidence="16">
    <location>
        <position position="305"/>
    </location>
</feature>
<feature type="modified residue" description="Phosphothreonine" evidence="15">
    <location>
        <position position="433"/>
    </location>
</feature>
<feature type="modified residue" description="N6-acetyllysine" evidence="12">
    <location>
        <position position="496"/>
    </location>
</feature>
<feature type="modified residue" description="N6-acetyllysine" evidence="12">
    <location>
        <position position="739"/>
    </location>
</feature>
<feature type="modified residue" description="Phosphoserine" evidence="13">
    <location>
        <position position="766"/>
    </location>
</feature>
<feature type="modified residue" description="Phosphoserine" evidence="11 15">
    <location>
        <position position="826"/>
    </location>
</feature>
<feature type="modified residue" description="Phosphoserine" evidence="15">
    <location>
        <position position="828"/>
    </location>
</feature>
<feature type="modified residue" description="Phosphoserine" evidence="13 14 15">
    <location>
        <position position="857"/>
    </location>
</feature>
<feature type="modified residue" description="Phosphothreonine" evidence="13">
    <location>
        <position position="907"/>
    </location>
</feature>
<feature type="modified residue" description="Phosphoserine" evidence="11 13 14 15 17">
    <location>
        <position position="909"/>
    </location>
</feature>
<feature type="modified residue" description="Phosphoserine" evidence="11 15">
    <location>
        <position position="1101"/>
    </location>
</feature>
<feature type="splice variant" id="VSP_021820" description="In isoform 2." evidence="8">
    <location>
        <begin position="1"/>
        <end position="104"/>
    </location>
</feature>
<feature type="splice variant" id="VSP_021821" description="In isoform 3." evidence="9">
    <location>
        <begin position="3"/>
        <end position="75"/>
    </location>
</feature>
<feature type="sequence variant" id="VAR_035926" description="In a colorectal cancer sample; somatic mutation; dbSNP:rs757859891." evidence="6">
    <original>R</original>
    <variation>W</variation>
    <location>
        <position position="627"/>
    </location>
</feature>
<feature type="sequence variant" id="VAR_029546" description="In dbSNP:rs17853763." evidence="5">
    <original>V</original>
    <variation>A</variation>
    <location>
        <position position="936"/>
    </location>
</feature>
<feature type="sequence variant" id="VAR_029547" description="In dbSNP:rs2303203.">
    <original>R</original>
    <variation>Q</variation>
    <location>
        <position position="1153"/>
    </location>
</feature>
<feature type="sequence conflict" description="In Ref. 1; BAA11499." evidence="10" ref="1">
    <original>G</original>
    <variation>S</variation>
    <location>
        <position position="444"/>
    </location>
</feature>
<organism>
    <name type="scientific">Homo sapiens</name>
    <name type="common">Human</name>
    <dbReference type="NCBI Taxonomy" id="9606"/>
    <lineage>
        <taxon>Eukaryota</taxon>
        <taxon>Metazoa</taxon>
        <taxon>Chordata</taxon>
        <taxon>Craniata</taxon>
        <taxon>Vertebrata</taxon>
        <taxon>Euteleostomi</taxon>
        <taxon>Mammalia</taxon>
        <taxon>Eutheria</taxon>
        <taxon>Euarchontoglires</taxon>
        <taxon>Primates</taxon>
        <taxon>Haplorrhini</taxon>
        <taxon>Catarrhini</taxon>
        <taxon>Hominidae</taxon>
        <taxon>Homo</taxon>
    </lineage>
</organism>
<dbReference type="EMBL" id="D80004">
    <property type="protein sequence ID" value="BAA11499.2"/>
    <property type="status" value="ALT_INIT"/>
    <property type="molecule type" value="mRNA"/>
</dbReference>
<dbReference type="EMBL" id="CH471114">
    <property type="protein sequence ID" value="EAW95445.1"/>
    <property type="molecule type" value="Genomic_DNA"/>
</dbReference>
<dbReference type="EMBL" id="CH471114">
    <property type="protein sequence ID" value="EAW95447.1"/>
    <property type="molecule type" value="Genomic_DNA"/>
</dbReference>
<dbReference type="EMBL" id="BC000753">
    <property type="protein sequence ID" value="AAH00753.2"/>
    <property type="molecule type" value="mRNA"/>
</dbReference>
<dbReference type="EMBL" id="BC009854">
    <property type="protein sequence ID" value="AAH09854.2"/>
    <property type="molecule type" value="mRNA"/>
</dbReference>
<dbReference type="EMBL" id="BC037556">
    <property type="protein sequence ID" value="AAH37556.1"/>
    <property type="molecule type" value="mRNA"/>
</dbReference>
<dbReference type="EMBL" id="BQ214916">
    <property type="status" value="NOT_ANNOTATED_CDS"/>
    <property type="molecule type" value="mRNA"/>
</dbReference>
<dbReference type="CCDS" id="CCDS10952.1">
    <molecule id="Q14687-1"/>
</dbReference>
<dbReference type="CCDS" id="CCDS45539.1">
    <molecule id="Q14687-2"/>
</dbReference>
<dbReference type="CCDS" id="CCDS62007.1">
    <molecule id="Q14687-3"/>
</dbReference>
<dbReference type="RefSeq" id="NP_001127945.1">
    <molecule id="Q14687-2"/>
    <property type="nucleotide sequence ID" value="NM_001134473.3"/>
</dbReference>
<dbReference type="RefSeq" id="NP_001265113.1">
    <molecule id="Q14687-3"/>
    <property type="nucleotide sequence ID" value="NM_001278184.3"/>
</dbReference>
<dbReference type="RefSeq" id="NP_055430.1">
    <molecule id="Q14687-1"/>
    <property type="nucleotide sequence ID" value="NM_014615.5"/>
</dbReference>
<dbReference type="RefSeq" id="XP_047289789.1">
    <molecule id="Q14687-2"/>
    <property type="nucleotide sequence ID" value="XM_047433833.1"/>
</dbReference>
<dbReference type="RefSeq" id="XP_047289790.1">
    <molecule id="Q14687-2"/>
    <property type="nucleotide sequence ID" value="XM_047433834.1"/>
</dbReference>
<dbReference type="RefSeq" id="XP_047289792.1">
    <molecule id="Q14687-2"/>
    <property type="nucleotide sequence ID" value="XM_047433836.1"/>
</dbReference>
<dbReference type="RefSeq" id="XP_054235869.1">
    <molecule id="Q14687-2"/>
    <property type="nucleotide sequence ID" value="XM_054379894.1"/>
</dbReference>
<dbReference type="RefSeq" id="XP_054235870.1">
    <molecule id="Q14687-2"/>
    <property type="nucleotide sequence ID" value="XM_054379895.1"/>
</dbReference>
<dbReference type="SMR" id="Q14687"/>
<dbReference type="BioGRID" id="116808">
    <property type="interactions" value="163"/>
</dbReference>
<dbReference type="CORUM" id="Q14687"/>
<dbReference type="FunCoup" id="Q14687">
    <property type="interactions" value="1241"/>
</dbReference>
<dbReference type="IntAct" id="Q14687">
    <property type="interactions" value="104"/>
</dbReference>
<dbReference type="MINT" id="Q14687"/>
<dbReference type="STRING" id="9606.ENSP00000253458"/>
<dbReference type="GlyGen" id="Q14687">
    <property type="glycosylation" value="6 sites, 1 O-linked glycan (5 sites)"/>
</dbReference>
<dbReference type="iPTMnet" id="Q14687"/>
<dbReference type="MetOSite" id="Q14687"/>
<dbReference type="PhosphoSitePlus" id="Q14687"/>
<dbReference type="BioMuta" id="GSE1"/>
<dbReference type="DMDM" id="126302550"/>
<dbReference type="jPOST" id="Q14687"/>
<dbReference type="MassIVE" id="Q14687"/>
<dbReference type="PaxDb" id="9606-ENSP00000253458"/>
<dbReference type="PeptideAtlas" id="Q14687"/>
<dbReference type="ProteomicsDB" id="60121">
    <molecule id="Q14687-1"/>
</dbReference>
<dbReference type="ProteomicsDB" id="60122">
    <molecule id="Q14687-2"/>
</dbReference>
<dbReference type="ProteomicsDB" id="60123">
    <molecule id="Q14687-3"/>
</dbReference>
<dbReference type="Pumba" id="Q14687"/>
<dbReference type="Antibodypedia" id="30633">
    <property type="antibodies" value="45 antibodies from 19 providers"/>
</dbReference>
<dbReference type="DNASU" id="23199"/>
<dbReference type="Ensembl" id="ENST00000253458.12">
    <molecule id="Q14687-1"/>
    <property type="protein sequence ID" value="ENSP00000253458.6"/>
    <property type="gene ID" value="ENSG00000131149.19"/>
</dbReference>
<dbReference type="Ensembl" id="ENST00000393243.5">
    <molecule id="Q14687-3"/>
    <property type="protein sequence ID" value="ENSP00000376934.1"/>
    <property type="gene ID" value="ENSG00000131149.19"/>
</dbReference>
<dbReference type="Ensembl" id="ENST00000405402.6">
    <molecule id="Q14687-2"/>
    <property type="protein sequence ID" value="ENSP00000384839.2"/>
    <property type="gene ID" value="ENSG00000131149.19"/>
</dbReference>
<dbReference type="GeneID" id="23199"/>
<dbReference type="KEGG" id="hsa:23199"/>
<dbReference type="MANE-Select" id="ENST00000253458.12">
    <property type="protein sequence ID" value="ENSP00000253458.6"/>
    <property type="RefSeq nucleotide sequence ID" value="NM_014615.5"/>
    <property type="RefSeq protein sequence ID" value="NP_055430.1"/>
</dbReference>
<dbReference type="UCSC" id="uc002fiw.4">
    <molecule id="Q14687-1"/>
    <property type="organism name" value="human"/>
</dbReference>
<dbReference type="AGR" id="HGNC:28979"/>
<dbReference type="CTD" id="23199"/>
<dbReference type="DisGeNET" id="23199"/>
<dbReference type="GeneCards" id="GSE1"/>
<dbReference type="HGNC" id="HGNC:28979">
    <property type="gene designation" value="GSE1"/>
</dbReference>
<dbReference type="HPA" id="ENSG00000131149">
    <property type="expression patterns" value="Low tissue specificity"/>
</dbReference>
<dbReference type="MIM" id="616886">
    <property type="type" value="gene"/>
</dbReference>
<dbReference type="neXtProt" id="NX_Q14687"/>
<dbReference type="OpenTargets" id="ENSG00000131149"/>
<dbReference type="PharmGKB" id="PA143485512"/>
<dbReference type="VEuPathDB" id="HostDB:ENSG00000131149"/>
<dbReference type="eggNOG" id="ENOG502QR0Q">
    <property type="taxonomic scope" value="Eukaryota"/>
</dbReference>
<dbReference type="GeneTree" id="ENSGT00700000104539"/>
<dbReference type="HOGENOM" id="CLU_009387_0_0_1"/>
<dbReference type="InParanoid" id="Q14687"/>
<dbReference type="OMA" id="IKAMEGP"/>
<dbReference type="OrthoDB" id="8744624at2759"/>
<dbReference type="PAN-GO" id="Q14687">
    <property type="GO annotations" value="0 GO annotations based on evolutionary models"/>
</dbReference>
<dbReference type="PhylomeDB" id="Q14687"/>
<dbReference type="TreeFam" id="TF332496"/>
<dbReference type="PathwayCommons" id="Q14687"/>
<dbReference type="SignaLink" id="Q14687"/>
<dbReference type="BioGRID-ORCS" id="23199">
    <property type="hits" value="36 hits in 1162 CRISPR screens"/>
</dbReference>
<dbReference type="ChiTaRS" id="GSE1">
    <property type="organism name" value="human"/>
</dbReference>
<dbReference type="GeneWiki" id="KIAA0182"/>
<dbReference type="GenomeRNAi" id="23199"/>
<dbReference type="Pharos" id="Q14687">
    <property type="development level" value="Tdark"/>
</dbReference>
<dbReference type="PRO" id="PR:Q14687"/>
<dbReference type="Proteomes" id="UP000005640">
    <property type="component" value="Chromosome 16"/>
</dbReference>
<dbReference type="RNAct" id="Q14687">
    <property type="molecule type" value="protein"/>
</dbReference>
<dbReference type="Bgee" id="ENSG00000131149">
    <property type="expression patterns" value="Expressed in corpus epididymis and 212 other cell types or tissues"/>
</dbReference>
<dbReference type="ExpressionAtlas" id="Q14687">
    <property type="expression patterns" value="baseline and differential"/>
</dbReference>
<dbReference type="GO" id="GO:0010467">
    <property type="term" value="P:gene expression"/>
    <property type="evidence" value="ECO:0007669"/>
    <property type="project" value="Ensembl"/>
</dbReference>
<dbReference type="GO" id="GO:0001701">
    <property type="term" value="P:in utero embryonic development"/>
    <property type="evidence" value="ECO:0007669"/>
    <property type="project" value="Ensembl"/>
</dbReference>
<dbReference type="GO" id="GO:0001890">
    <property type="term" value="P:placenta development"/>
    <property type="evidence" value="ECO:0007669"/>
    <property type="project" value="Ensembl"/>
</dbReference>
<dbReference type="InterPro" id="IPR022207">
    <property type="entry name" value="GSE-like"/>
</dbReference>
<dbReference type="InterPro" id="IPR042337">
    <property type="entry name" value="GSE1"/>
</dbReference>
<dbReference type="PANTHER" id="PTHR17608">
    <property type="entry name" value="GENETIC SUPPRESSOR ELEMENT 1"/>
    <property type="match status" value="1"/>
</dbReference>
<dbReference type="PANTHER" id="PTHR17608:SF4">
    <property type="entry name" value="GENETIC SUPPRESSOR ELEMENT 1"/>
    <property type="match status" value="1"/>
</dbReference>
<dbReference type="Pfam" id="PF12540">
    <property type="entry name" value="DUF3736"/>
    <property type="match status" value="1"/>
</dbReference>
<name>GSE1_HUMAN</name>
<comment type="subunit">
    <text evidence="4">May be a component of a BHC histone deacetylase complex that contains HDAC1, HDAC2, HMG20B/BRAF35, KDM1A, RCOR1/CoREST, PHF21A/BHC80, ZMYM2, ZNF217, ZMYM3, GSE1 and GTF2I.</text>
</comment>
<comment type="interaction">
    <interactant intactId="EBI-372619">
        <id>Q14687</id>
    </interactant>
    <interactant intactId="EBI-946029">
        <id>Q6P1W5</id>
        <label>C1orf94</label>
    </interactant>
    <organismsDiffer>false</organismsDiffer>
    <experiments>8</experiments>
</comment>
<comment type="interaction">
    <interactant intactId="EBI-372619">
        <id>Q14687</id>
    </interactant>
    <interactant intactId="EBI-10179719">
        <id>A2RRN7</id>
        <label>CADPS</label>
    </interactant>
    <organismsDiffer>false</organismsDiffer>
    <experiments>3</experiments>
</comment>
<comment type="interaction">
    <interactant intactId="EBI-372619">
        <id>Q14687</id>
    </interactant>
    <interactant intactId="EBI-3866279">
        <id>Q9BWT7</id>
        <label>CARD10</label>
    </interactant>
    <organismsDiffer>false</organismsDiffer>
    <experiments>3</experiments>
</comment>
<comment type="interaction">
    <interactant intactId="EBI-372619">
        <id>Q14687</id>
    </interactant>
    <interactant intactId="EBI-749051">
        <id>Q8IYR0</id>
        <label>CFAP206</label>
    </interactant>
    <organismsDiffer>false</organismsDiffer>
    <experiments>3</experiments>
</comment>
<comment type="interaction">
    <interactant intactId="EBI-372619">
        <id>Q14687</id>
    </interactant>
    <interactant intactId="EBI-618309">
        <id>Q08379</id>
        <label>GOLGA2</label>
    </interactant>
    <organismsDiffer>false</organismsDiffer>
    <experiments>9</experiments>
</comment>
<comment type="interaction">
    <interactant intactId="EBI-372619">
        <id>Q14687</id>
    </interactant>
    <interactant intactId="EBI-739546">
        <id>Q96PV6</id>
        <label>LENG8</label>
    </interactant>
    <organismsDiffer>false</organismsDiffer>
    <experiments>3</experiments>
</comment>
<comment type="interaction">
    <interactant intactId="EBI-372619">
        <id>Q14687</id>
    </interactant>
    <interactant intactId="EBI-749285">
        <id>Q15311</id>
        <label>RALBP1</label>
    </interactant>
    <organismsDiffer>false</organismsDiffer>
    <experiments>4</experiments>
</comment>
<comment type="interaction">
    <interactant intactId="EBI-372619">
        <id>Q14687</id>
    </interactant>
    <interactant intactId="EBI-740322">
        <id>Q93062</id>
        <label>RBPMS</label>
    </interactant>
    <organismsDiffer>false</organismsDiffer>
    <experiments>3</experiments>
</comment>
<comment type="interaction">
    <interactant intactId="EBI-372619">
        <id>Q14687</id>
    </interactant>
    <interactant intactId="EBI-743428">
        <id>Q9P2K3</id>
        <label>RCOR3</label>
    </interactant>
    <organismsDiffer>false</organismsDiffer>
    <experiments>9</experiments>
</comment>
<comment type="interaction">
    <interactant intactId="EBI-372619">
        <id>Q14687</id>
    </interactant>
    <interactant intactId="EBI-1504830">
        <id>Q9P2K3-2</id>
        <label>RCOR3</label>
    </interactant>
    <organismsDiffer>false</organismsDiffer>
    <experiments>3</experiments>
</comment>
<comment type="interaction">
    <interactant intactId="EBI-372619">
        <id>Q14687</id>
    </interactant>
    <interactant intactId="EBI-10224192">
        <id>Q06455-4</id>
        <label>RUNX1T1</label>
    </interactant>
    <organismsDiffer>false</organismsDiffer>
    <experiments>3</experiments>
</comment>
<comment type="interaction">
    <interactant intactId="EBI-372619">
        <id>Q14687</id>
    </interactant>
    <interactant intactId="EBI-750487">
        <id>Q8WW24</id>
        <label>TEKT4</label>
    </interactant>
    <organismsDiffer>false</organismsDiffer>
    <experiments>5</experiments>
</comment>
<comment type="interaction">
    <interactant intactId="EBI-372619">
        <id>Q14687</id>
    </interactant>
    <interactant intactId="EBI-1105213">
        <id>Q9UBB9</id>
        <label>TFIP11</label>
    </interactant>
    <organismsDiffer>false</organismsDiffer>
    <experiments>3</experiments>
</comment>
<comment type="interaction">
    <interactant intactId="EBI-372619">
        <id>Q14687</id>
    </interactant>
    <interactant intactId="EBI-355744">
        <id>Q12933</id>
        <label>TRAF2</label>
    </interactant>
    <organismsDiffer>false</organismsDiffer>
    <experiments>3</experiments>
</comment>
<comment type="interaction">
    <interactant intactId="EBI-372619">
        <id>Q14687</id>
    </interactant>
    <interactant intactId="EBI-719493">
        <id>P14373</id>
        <label>TRIM27</label>
    </interactant>
    <organismsDiffer>false</organismsDiffer>
    <experiments>5</experiments>
</comment>
<comment type="interaction">
    <interactant intactId="EBI-372619">
        <id>Q14687</id>
    </interactant>
    <interactant intactId="EBI-742327">
        <id>Q15654</id>
        <label>TRIP6</label>
    </interactant>
    <organismsDiffer>false</organismsDiffer>
    <experiments>5</experiments>
</comment>
<comment type="interaction">
    <interactant intactId="EBI-372619">
        <id>Q14687</id>
    </interactant>
    <interactant intactId="EBI-746595">
        <id>Q96E35</id>
        <label>ZMYND19</label>
    </interactant>
    <organismsDiffer>false</organismsDiffer>
    <experiments>3</experiments>
</comment>
<comment type="alternative products">
    <event type="alternative splicing"/>
    <isoform>
        <id>Q14687-1</id>
        <name>1</name>
        <sequence type="displayed"/>
    </isoform>
    <isoform>
        <id>Q14687-2</id>
        <name>2</name>
        <sequence type="described" ref="VSP_021820"/>
    </isoform>
    <isoform>
        <id>Q14687-3</id>
        <name>3</name>
        <sequence type="described" ref="VSP_021821"/>
    </isoform>
</comment>
<comment type="induction">
    <text evidence="7">Negatively regulated by miR-489-5p.</text>
</comment>
<comment type="sequence caution" evidence="10">
    <conflict type="erroneous initiation">
        <sequence resource="EMBL-CDS" id="BAA11499"/>
    </conflict>
</comment>
<sequence>MKGMSHEPKSPSLGMLSTATRTTATVNPLTPSPLNGALVPSGSPATSSALSAQAAPSSSFAAALRKLAKQAEEPRGSSLSSESSPVSSPATNHSSPASTPKRVPMGPIIVPPGGHSVPSTPPVVTIAPTKTVNGVWRSESRQDAGSRSSSGGRERLIVEPPLPQEKAGGPAIPSHLLSTPYPFGLSPSSVVQDSRFPPLNLQRPVHHVVPPSTVTEDYLRSFRPYHTTDDLRMSSLPPLGLDPATAAAYYHPSYLAPHPFPHPAFRMDDSYCLSALRSPFYPIPTPGSLPPLHPSAMHLHLSGVRYPPELSHSSLAALHSERMSGLSAERLQMDEELRREREREREREREREADREREKEREREREKEREQEKEREREKERERELERQREQRAREKELLAAKALEPSFLPVAELHGLRGHATEERGKPSEQLTPTRAEKLKDAGLQAPKPVQHPLHPVPTPHHTVPSLISNHGIFSLPSSSAATALLIQRTNEEEKWLARQRRLRQEKEDRQSQVSEFRQQVLEQHLDMGRPPVPAEAEHRPESTTRPGPNRHEPGGRDPPQHFGGPPPLISPKPQLHAAPTALWNPVSLMDNTLETRRAESHSLHSHPAAFEPSRQAAVPLVKVERVFCPEKAEEGPRKREPAPLDKYQPPPPPPREGGSLEHQPFLPGPGPFLAELEKSTQTILGQQRASLPQAATFGELSGPLKPGSPYRPPVPRAPDPAYIYDEFLQQRRRLVSKLDLEERRRREAQEKGYYYDLDDSYDESDEEEVRAHLRCVAEQPPLKLDTSSEKLEFLQLFGLTTQQQKEELVAQKRRKRRRMLRERSPSPPTIQSKRQTPSPRLALSTRYSPDEMNNSPNFEEKKKFLTIFNLTHISAEKRKDKERLVEMLRAMKQKALSAAVADSLTNSPRDSPAVSLSEPATQQASLDVEKPVGVAASLSDIPKAAEPGKLEQVRPQELSRVQELAPASGEKARLSEAPGGKKSLSMLHYIRGAAPKDIPVPLSHSTNGKSKPWEPFVAEEFAHQFHESVLQSTQKALQKHKGSVAVLSAEQNHKVDTSVHYNIPELQSSSRAPPPQHNGQQEPPTARKGPPTQELDRDSEEEEEEDDEDGEDEEEVPKRKWQGIEAVFEAYQEHIEEQNLERQVLQTQCRRLEARHYSLSLTAEQLSHSVAELRSQKQKMVSERERLQAELDHLRKCLALPAMHWPRGYLKGYPR</sequence>
<evidence type="ECO:0000250" key="1">
    <source>
        <dbReference type="UniProtKB" id="Q3U3C9"/>
    </source>
</evidence>
<evidence type="ECO:0000255" key="2"/>
<evidence type="ECO:0000256" key="3">
    <source>
        <dbReference type="SAM" id="MobiDB-lite"/>
    </source>
</evidence>
<evidence type="ECO:0000269" key="4">
    <source>
    </source>
</evidence>
<evidence type="ECO:0000269" key="5">
    <source>
    </source>
</evidence>
<evidence type="ECO:0000269" key="6">
    <source>
    </source>
</evidence>
<evidence type="ECO:0000269" key="7">
    <source>
    </source>
</evidence>
<evidence type="ECO:0000303" key="8">
    <source>
    </source>
</evidence>
<evidence type="ECO:0000303" key="9">
    <source>
    </source>
</evidence>
<evidence type="ECO:0000305" key="10"/>
<evidence type="ECO:0007744" key="11">
    <source>
    </source>
</evidence>
<evidence type="ECO:0007744" key="12">
    <source>
    </source>
</evidence>
<evidence type="ECO:0007744" key="13">
    <source>
    </source>
</evidence>
<evidence type="ECO:0007744" key="14">
    <source>
    </source>
</evidence>
<evidence type="ECO:0007744" key="15">
    <source>
    </source>
</evidence>
<evidence type="ECO:0007744" key="16">
    <source>
    </source>
</evidence>
<evidence type="ECO:0007744" key="17">
    <source>
    </source>
</evidence>
<gene>
    <name type="primary">GSE1</name>
    <name type="synonym">KIAA0182</name>
</gene>
<proteinExistence type="evidence at protein level"/>
<protein>
    <recommendedName>
        <fullName>Genetic suppressor element 1</fullName>
    </recommendedName>
</protein>
<accession>Q14687</accession>
<accession>D3DUM4</accession>
<accession>Q8IY61</accession>
<accession>Q96GA4</accession>
<accession>Q9BW09</accession>
<keyword id="KW-0007">Acetylation</keyword>
<keyword id="KW-0025">Alternative splicing</keyword>
<keyword id="KW-0175">Coiled coil</keyword>
<keyword id="KW-0488">Methylation</keyword>
<keyword id="KW-0597">Phosphoprotein</keyword>
<keyword id="KW-1267">Proteomics identification</keyword>
<keyword id="KW-1185">Reference proteome</keyword>
<reference key="1">
    <citation type="journal article" date="1996" name="DNA Res.">
        <title>Prediction of the coding sequences of unidentified human genes. V. The coding sequences of 40 new genes (KIAA0161-KIAA0200) deduced by analysis of cDNA clones from human cell line KG-1.</title>
        <authorList>
            <person name="Nagase T."/>
            <person name="Seki N."/>
            <person name="Ishikawa K."/>
            <person name="Tanaka A."/>
            <person name="Nomura N."/>
        </authorList>
    </citation>
    <scope>NUCLEOTIDE SEQUENCE [LARGE SCALE MRNA] (ISOFORM 3)</scope>
    <source>
        <tissue>Bone marrow</tissue>
    </source>
</reference>
<reference key="2">
    <citation type="submission" date="2005-09" db="EMBL/GenBank/DDBJ databases">
        <authorList>
            <person name="Mural R.J."/>
            <person name="Istrail S."/>
            <person name="Sutton G.G."/>
            <person name="Florea L."/>
            <person name="Halpern A.L."/>
            <person name="Mobarry C.M."/>
            <person name="Lippert R."/>
            <person name="Walenz B."/>
            <person name="Shatkay H."/>
            <person name="Dew I."/>
            <person name="Miller J.R."/>
            <person name="Flanigan M.J."/>
            <person name="Edwards N.J."/>
            <person name="Bolanos R."/>
            <person name="Fasulo D."/>
            <person name="Halldorsson B.V."/>
            <person name="Hannenhalli S."/>
            <person name="Turner R."/>
            <person name="Yooseph S."/>
            <person name="Lu F."/>
            <person name="Nusskern D.R."/>
            <person name="Shue B.C."/>
            <person name="Zheng X.H."/>
            <person name="Zhong F."/>
            <person name="Delcher A.L."/>
            <person name="Huson D.H."/>
            <person name="Kravitz S.A."/>
            <person name="Mouchard L."/>
            <person name="Reinert K."/>
            <person name="Remington K.A."/>
            <person name="Clark A.G."/>
            <person name="Waterman M.S."/>
            <person name="Eichler E.E."/>
            <person name="Adams M.D."/>
            <person name="Hunkapiller M.W."/>
            <person name="Myers E.W."/>
            <person name="Venter J.C."/>
        </authorList>
    </citation>
    <scope>NUCLEOTIDE SEQUENCE [LARGE SCALE GENOMIC DNA]</scope>
</reference>
<reference key="3">
    <citation type="journal article" date="2004" name="Genome Res.">
        <title>The status, quality, and expansion of the NIH full-length cDNA project: the Mammalian Gene Collection (MGC).</title>
        <authorList>
            <consortium name="The MGC Project Team"/>
        </authorList>
    </citation>
    <scope>NUCLEOTIDE SEQUENCE [LARGE SCALE MRNA] (ISOFORMS 1 AND 2)</scope>
    <scope>VARIANT ALA-936</scope>
    <source>
        <tissue>Lung</tissue>
        <tissue>Placenta</tissue>
    </source>
</reference>
<reference key="4">
    <citation type="journal article" date="2003" name="J. Biol. Chem.">
        <title>A candidate X-linked mental retardation gene is a component of a new family of histone deacetylase-containing complexes.</title>
        <authorList>
            <person name="Hakimi M.-A."/>
            <person name="Dong Y."/>
            <person name="Lane W.S."/>
            <person name="Speicher D.W."/>
            <person name="Shiekhattar R."/>
        </authorList>
    </citation>
    <scope>IDENTIFICATION IN THE BHC COMPLEX WITH GTF2I; HDAC1; HDAC2; HMG20B; KDM1A; PHF21A; RCOR1; ZMYM2; ZMYM3 AND ZNF217</scope>
</reference>
<reference key="5">
    <citation type="journal article" date="2008" name="Proc. Natl. Acad. Sci. U.S.A.">
        <title>A quantitative atlas of mitotic phosphorylation.</title>
        <authorList>
            <person name="Dephoure N."/>
            <person name="Zhou C."/>
            <person name="Villen J."/>
            <person name="Beausoleil S.A."/>
            <person name="Bakalarski C.E."/>
            <person name="Elledge S.J."/>
            <person name="Gygi S.P."/>
        </authorList>
    </citation>
    <scope>PHOSPHORYLATION [LARGE SCALE ANALYSIS] AT SER-826; SER-909 AND SER-1101</scope>
    <scope>IDENTIFICATION BY MASS SPECTROMETRY [LARGE SCALE ANALYSIS]</scope>
    <source>
        <tissue>Cervix carcinoma</tissue>
    </source>
</reference>
<reference key="6">
    <citation type="journal article" date="2009" name="Sci. Signal.">
        <title>Quantitative phosphoproteomic analysis of T cell receptor signaling reveals system-wide modulation of protein-protein interactions.</title>
        <authorList>
            <person name="Mayya V."/>
            <person name="Lundgren D.H."/>
            <person name="Hwang S.-I."/>
            <person name="Rezaul K."/>
            <person name="Wu L."/>
            <person name="Eng J.K."/>
            <person name="Rodionov V."/>
            <person name="Han D.K."/>
        </authorList>
    </citation>
    <scope>PHOSPHORYLATION [LARGE SCALE ANALYSIS] AT SER-84; SER-766; SER-857; THR-907 AND SER-909</scope>
    <scope>IDENTIFICATION BY MASS SPECTROMETRY [LARGE SCALE ANALYSIS]</scope>
    <source>
        <tissue>Leukemic T-cell</tissue>
    </source>
</reference>
<reference key="7">
    <citation type="journal article" date="2009" name="Science">
        <title>Lysine acetylation targets protein complexes and co-regulates major cellular functions.</title>
        <authorList>
            <person name="Choudhary C."/>
            <person name="Kumar C."/>
            <person name="Gnad F."/>
            <person name="Nielsen M.L."/>
            <person name="Rehman M."/>
            <person name="Walther T.C."/>
            <person name="Olsen J.V."/>
            <person name="Mann M."/>
        </authorList>
    </citation>
    <scope>ACETYLATION [LARGE SCALE ANALYSIS] AT LYS-496 AND LYS-739</scope>
    <scope>IDENTIFICATION BY MASS SPECTROMETRY [LARGE SCALE ANALYSIS]</scope>
</reference>
<reference key="8">
    <citation type="journal article" date="2010" name="Sci. Signal.">
        <title>Quantitative phosphoproteomics reveals widespread full phosphorylation site occupancy during mitosis.</title>
        <authorList>
            <person name="Olsen J.V."/>
            <person name="Vermeulen M."/>
            <person name="Santamaria A."/>
            <person name="Kumar C."/>
            <person name="Miller M.L."/>
            <person name="Jensen L.J."/>
            <person name="Gnad F."/>
            <person name="Cox J."/>
            <person name="Jensen T.S."/>
            <person name="Nigg E.A."/>
            <person name="Brunak S."/>
            <person name="Mann M."/>
        </authorList>
    </citation>
    <scope>PHOSPHORYLATION [LARGE SCALE ANALYSIS] AT SER-857 AND SER-909</scope>
    <scope>IDENTIFICATION BY MASS SPECTROMETRY [LARGE SCALE ANALYSIS]</scope>
    <source>
        <tissue>Cervix carcinoma</tissue>
    </source>
</reference>
<reference key="9">
    <citation type="journal article" date="2011" name="BMC Syst. Biol.">
        <title>Initial characterization of the human central proteome.</title>
        <authorList>
            <person name="Burkard T.R."/>
            <person name="Planyavsky M."/>
            <person name="Kaupe I."/>
            <person name="Breitwieser F.P."/>
            <person name="Buerckstuemmer T."/>
            <person name="Bennett K.L."/>
            <person name="Superti-Furga G."/>
            <person name="Colinge J."/>
        </authorList>
    </citation>
    <scope>IDENTIFICATION BY MASS SPECTROMETRY [LARGE SCALE ANALYSIS]</scope>
</reference>
<reference key="10">
    <citation type="journal article" date="2011" name="Sci. Signal.">
        <title>System-wide temporal characterization of the proteome and phosphoproteome of human embryonic stem cell differentiation.</title>
        <authorList>
            <person name="Rigbolt K.T."/>
            <person name="Prokhorova T.A."/>
            <person name="Akimov V."/>
            <person name="Henningsen J."/>
            <person name="Johansen P.T."/>
            <person name="Kratchmarova I."/>
            <person name="Kassem M."/>
            <person name="Mann M."/>
            <person name="Olsen J.V."/>
            <person name="Blagoev B."/>
        </authorList>
    </citation>
    <scope>IDENTIFICATION BY MASS SPECTROMETRY [LARGE SCALE ANALYSIS]</scope>
</reference>
<reference key="11">
    <citation type="journal article" date="2013" name="J. Proteome Res.">
        <title>Toward a comprehensive characterization of a human cancer cell phosphoproteome.</title>
        <authorList>
            <person name="Zhou H."/>
            <person name="Di Palma S."/>
            <person name="Preisinger C."/>
            <person name="Peng M."/>
            <person name="Polat A.N."/>
            <person name="Heck A.J."/>
            <person name="Mohammed S."/>
        </authorList>
    </citation>
    <scope>PHOSPHORYLATION [LARGE SCALE ANALYSIS] AT SER-10; SER-84; THR-433; SER-826; SER-828; SER-857; SER-909 AND SER-1101</scope>
    <scope>IDENTIFICATION BY MASS SPECTROMETRY [LARGE SCALE ANALYSIS]</scope>
    <source>
        <tissue>Cervix carcinoma</tissue>
        <tissue>Erythroleukemia</tissue>
    </source>
</reference>
<reference key="12">
    <citation type="journal article" date="2014" name="J. Proteomics">
        <title>An enzyme assisted RP-RPLC approach for in-depth analysis of human liver phosphoproteome.</title>
        <authorList>
            <person name="Bian Y."/>
            <person name="Song C."/>
            <person name="Cheng K."/>
            <person name="Dong M."/>
            <person name="Wang F."/>
            <person name="Huang J."/>
            <person name="Sun D."/>
            <person name="Wang L."/>
            <person name="Ye M."/>
            <person name="Zou H."/>
        </authorList>
    </citation>
    <scope>PHOSPHORYLATION [LARGE SCALE ANALYSIS] AT SER-909</scope>
    <scope>IDENTIFICATION BY MASS SPECTROMETRY [LARGE SCALE ANALYSIS]</scope>
    <source>
        <tissue>Liver</tissue>
    </source>
</reference>
<reference key="13">
    <citation type="journal article" date="2014" name="Mol. Cell. Proteomics">
        <title>Immunoaffinity enrichment and mass spectrometry analysis of protein methylation.</title>
        <authorList>
            <person name="Guo A."/>
            <person name="Gu H."/>
            <person name="Zhou J."/>
            <person name="Mulhern D."/>
            <person name="Wang Y."/>
            <person name="Lee K.A."/>
            <person name="Yang V."/>
            <person name="Aguiar M."/>
            <person name="Kornhauser J."/>
            <person name="Jia X."/>
            <person name="Ren J."/>
            <person name="Beausoleil S.A."/>
            <person name="Silva J.C."/>
            <person name="Vemulapalli V."/>
            <person name="Bedford M.T."/>
            <person name="Comb M.J."/>
        </authorList>
    </citation>
    <scope>METHYLATION [LARGE SCALE ANALYSIS] AT ARG-305</scope>
    <scope>IDENTIFICATION BY MASS SPECTROMETRY [LARGE SCALE ANALYSIS]</scope>
    <source>
        <tissue>Colon carcinoma</tissue>
    </source>
</reference>
<reference key="14">
    <citation type="journal article" date="2016" name="Biochem. Biophys. Res. Commun.">
        <title>GSE1 negative regulation by miR-489-5p promotes breast cancer cell proliferation and invasion.</title>
        <authorList>
            <person name="Chai P."/>
            <person name="Tian J."/>
            <person name="Zhao D."/>
            <person name="Zhang H."/>
            <person name="Cui J."/>
            <person name="Ding K."/>
            <person name="Liu B."/>
        </authorList>
    </citation>
    <scope>DOWN-REGULATION BY MIR-489-5P</scope>
</reference>
<reference key="15">
    <citation type="journal article" date="2006" name="Science">
        <title>The consensus coding sequences of human breast and colorectal cancers.</title>
        <authorList>
            <person name="Sjoeblom T."/>
            <person name="Jones S."/>
            <person name="Wood L.D."/>
            <person name="Parsons D.W."/>
            <person name="Lin J."/>
            <person name="Barber T.D."/>
            <person name="Mandelker D."/>
            <person name="Leary R.J."/>
            <person name="Ptak J."/>
            <person name="Silliman N."/>
            <person name="Szabo S."/>
            <person name="Buckhaults P."/>
            <person name="Farrell C."/>
            <person name="Meeh P."/>
            <person name="Markowitz S.D."/>
            <person name="Willis J."/>
            <person name="Dawson D."/>
            <person name="Willson J.K.V."/>
            <person name="Gazdar A.F."/>
            <person name="Hartigan J."/>
            <person name="Wu L."/>
            <person name="Liu C."/>
            <person name="Parmigiani G."/>
            <person name="Park B.H."/>
            <person name="Bachman K.E."/>
            <person name="Papadopoulos N."/>
            <person name="Vogelstein B."/>
            <person name="Kinzler K.W."/>
            <person name="Velculescu V.E."/>
        </authorList>
    </citation>
    <scope>VARIANT [LARGE SCALE ANALYSIS] TRP-627</scope>
</reference>